<comment type="function">
    <text>Involved in a secretory pathway responsible for the surface presentation of determinants needed for the entry of Salmonella species into mammalian cells.</text>
</comment>
<comment type="similarity">
    <text evidence="1">Belongs to the FliN/MopA/SpaO family.</text>
</comment>
<gene>
    <name type="primary">spaO</name>
    <name type="ordered locus">STM2891</name>
</gene>
<proteinExistence type="evidence at protein level"/>
<reference key="1">
    <citation type="journal article" date="1993" name="EMBO J.">
        <title>Cognate gene clusters govern invasion of host epithelial cells by Salmonella typhimurium and Shigella flexneri.</title>
        <authorList>
            <person name="Groisman E.A."/>
            <person name="Ochman H."/>
        </authorList>
    </citation>
    <scope>NUCLEOTIDE SEQUENCE [GENOMIC DNA]</scope>
</reference>
<reference key="2">
    <citation type="journal article" date="2001" name="Nature">
        <title>Complete genome sequence of Salmonella enterica serovar Typhimurium LT2.</title>
        <authorList>
            <person name="McClelland M."/>
            <person name="Sanderson K.E."/>
            <person name="Spieth J."/>
            <person name="Clifton S.W."/>
            <person name="Latreille P."/>
            <person name="Courtney L."/>
            <person name="Porwollik S."/>
            <person name="Ali J."/>
            <person name="Dante M."/>
            <person name="Du F."/>
            <person name="Hou S."/>
            <person name="Layman D."/>
            <person name="Leonard S."/>
            <person name="Nguyen C."/>
            <person name="Scott K."/>
            <person name="Holmes A."/>
            <person name="Grewal N."/>
            <person name="Mulvaney E."/>
            <person name="Ryan E."/>
            <person name="Sun H."/>
            <person name="Florea L."/>
            <person name="Miller W."/>
            <person name="Stoneking T."/>
            <person name="Nhan M."/>
            <person name="Waterston R."/>
            <person name="Wilson R.K."/>
        </authorList>
    </citation>
    <scope>NUCLEOTIDE SEQUENCE [LARGE SCALE GENOMIC DNA]</scope>
    <source>
        <strain>LT2 / SGSC1412 / ATCC 700720</strain>
    </source>
</reference>
<organism>
    <name type="scientific">Salmonella typhimurium (strain LT2 / SGSC1412 / ATCC 700720)</name>
    <dbReference type="NCBI Taxonomy" id="99287"/>
    <lineage>
        <taxon>Bacteria</taxon>
        <taxon>Pseudomonadati</taxon>
        <taxon>Pseudomonadota</taxon>
        <taxon>Gammaproteobacteria</taxon>
        <taxon>Enterobacterales</taxon>
        <taxon>Enterobacteriaceae</taxon>
        <taxon>Salmonella</taxon>
    </lineage>
</organism>
<keyword id="KW-0002">3D-structure</keyword>
<keyword id="KW-1185">Reference proteome</keyword>
<keyword id="KW-0843">Virulence</keyword>
<protein>
    <recommendedName>
        <fullName>Surface presentation of antigens protein SpaO</fullName>
    </recommendedName>
</protein>
<evidence type="ECO:0000305" key="1"/>
<evidence type="ECO:0007829" key="2">
    <source>
        <dbReference type="PDB" id="4YX1"/>
    </source>
</evidence>
<evidence type="ECO:0007829" key="3">
    <source>
        <dbReference type="PDB" id="4YX7"/>
    </source>
</evidence>
<feature type="chain" id="PRO_0000184126" description="Surface presentation of antigens protein SpaO">
    <location>
        <begin position="1"/>
        <end position="303"/>
    </location>
</feature>
<feature type="strand" evidence="3">
    <location>
        <begin position="149"/>
        <end position="162"/>
    </location>
</feature>
<feature type="turn" evidence="3">
    <location>
        <begin position="166"/>
        <end position="168"/>
    </location>
</feature>
<feature type="strand" evidence="3">
    <location>
        <begin position="174"/>
        <end position="176"/>
    </location>
</feature>
<feature type="strand" evidence="3">
    <location>
        <begin position="179"/>
        <end position="186"/>
    </location>
</feature>
<feature type="strand" evidence="3">
    <location>
        <begin position="189"/>
        <end position="197"/>
    </location>
</feature>
<feature type="strand" evidence="3">
    <location>
        <begin position="200"/>
        <end position="203"/>
    </location>
</feature>
<feature type="strand" evidence="2">
    <location>
        <begin position="232"/>
        <end position="243"/>
    </location>
</feature>
<feature type="helix" evidence="2">
    <location>
        <begin position="245"/>
        <end position="252"/>
    </location>
</feature>
<feature type="strand" evidence="2">
    <location>
        <begin position="255"/>
        <end position="258"/>
    </location>
</feature>
<feature type="helix" evidence="2">
    <location>
        <begin position="263"/>
        <end position="265"/>
    </location>
</feature>
<feature type="strand" evidence="2">
    <location>
        <begin position="267"/>
        <end position="271"/>
    </location>
</feature>
<feature type="strand" evidence="2">
    <location>
        <begin position="274"/>
        <end position="283"/>
    </location>
</feature>
<feature type="strand" evidence="2">
    <location>
        <begin position="285"/>
        <end position="295"/>
    </location>
</feature>
<name>SPAO_SALTY</name>
<dbReference type="EMBL" id="X73525">
    <property type="protein sequence ID" value="CAA51924.1"/>
    <property type="molecule type" value="Genomic_DNA"/>
</dbReference>
<dbReference type="EMBL" id="AE006468">
    <property type="protein sequence ID" value="AAL21771.1"/>
    <property type="molecule type" value="Genomic_DNA"/>
</dbReference>
<dbReference type="PIR" id="S37307">
    <property type="entry name" value="S37307"/>
</dbReference>
<dbReference type="RefSeq" id="NP_461812.1">
    <property type="nucleotide sequence ID" value="NC_003197.2"/>
</dbReference>
<dbReference type="RefSeq" id="WP_000058734.1">
    <property type="nucleotide sequence ID" value="NC_003197.2"/>
</dbReference>
<dbReference type="PDB" id="4YX1">
    <property type="method" value="X-ray"/>
    <property type="resolution" value="1.35 A"/>
    <property type="chains" value="A/B=232-297"/>
</dbReference>
<dbReference type="PDB" id="4YX5">
    <property type="method" value="X-ray"/>
    <property type="resolution" value="2.90 A"/>
    <property type="chains" value="A=145-213, B=232-297"/>
</dbReference>
<dbReference type="PDB" id="4YX7">
    <property type="method" value="X-ray"/>
    <property type="resolution" value="2.00 A"/>
    <property type="chains" value="A/D=145-213, B/E=232-297"/>
</dbReference>
<dbReference type="PDB" id="4YXA">
    <property type="method" value="X-ray"/>
    <property type="resolution" value="2.35 A"/>
    <property type="chains" value="A/D=145-213, B/E=232-297"/>
</dbReference>
<dbReference type="PDBsum" id="4YX1"/>
<dbReference type="PDBsum" id="4YX5"/>
<dbReference type="PDBsum" id="4YX7"/>
<dbReference type="PDBsum" id="4YXA"/>
<dbReference type="SASBDB" id="P40699"/>
<dbReference type="SMR" id="P40699"/>
<dbReference type="STRING" id="99287.STM2891"/>
<dbReference type="TCDB" id="3.A.6.1.3">
    <property type="family name" value="the type iii (virulence-related) secretory pathway (iiisp) family"/>
</dbReference>
<dbReference type="PaxDb" id="99287-STM2891"/>
<dbReference type="GeneID" id="1254414"/>
<dbReference type="KEGG" id="stm:STM2891"/>
<dbReference type="PATRIC" id="fig|99287.12.peg.3047"/>
<dbReference type="HOGENOM" id="CLU_077609_0_0_6"/>
<dbReference type="OMA" id="IYNTKIF"/>
<dbReference type="BioCyc" id="SENT99287:STM2891-MONOMER"/>
<dbReference type="EvolutionaryTrace" id="P40699"/>
<dbReference type="Proteomes" id="UP000001014">
    <property type="component" value="Chromosome"/>
</dbReference>
<dbReference type="GO" id="GO:0071978">
    <property type="term" value="P:bacterial-type flagellum-dependent swarming motility"/>
    <property type="evidence" value="ECO:0000318"/>
    <property type="project" value="GO_Central"/>
</dbReference>
<dbReference type="GO" id="GO:0050918">
    <property type="term" value="P:positive chemotaxis"/>
    <property type="evidence" value="ECO:0000318"/>
    <property type="project" value="GO_Central"/>
</dbReference>
<dbReference type="GO" id="GO:0030254">
    <property type="term" value="P:protein secretion by the type III secretion system"/>
    <property type="evidence" value="ECO:0007669"/>
    <property type="project" value="InterPro"/>
</dbReference>
<dbReference type="Gene3D" id="2.30.330.10">
    <property type="entry name" value="SpoA-like"/>
    <property type="match status" value="1"/>
</dbReference>
<dbReference type="InterPro" id="IPR001543">
    <property type="entry name" value="FliN-like_C"/>
</dbReference>
<dbReference type="InterPro" id="IPR036429">
    <property type="entry name" value="SpoA-like_sf"/>
</dbReference>
<dbReference type="InterPro" id="IPR003283">
    <property type="entry name" value="T3SS_OMP_SpaO"/>
</dbReference>
<dbReference type="InterPro" id="IPR013385">
    <property type="entry name" value="T3SS_SpaO/YscQ/SpaO"/>
</dbReference>
<dbReference type="NCBIfam" id="NF006018">
    <property type="entry name" value="PRK08158.1"/>
    <property type="match status" value="1"/>
</dbReference>
<dbReference type="NCBIfam" id="TIGR02551">
    <property type="entry name" value="SpaO_YscQ"/>
    <property type="match status" value="1"/>
</dbReference>
<dbReference type="PANTHER" id="PTHR30034">
    <property type="entry name" value="FLAGELLAR MOTOR SWITCH PROTEIN FLIM"/>
    <property type="match status" value="1"/>
</dbReference>
<dbReference type="PANTHER" id="PTHR30034:SF5">
    <property type="entry name" value="SECRETION SYSTEM APPARATUS PROTEIN SSAQ"/>
    <property type="match status" value="1"/>
</dbReference>
<dbReference type="Pfam" id="PF01052">
    <property type="entry name" value="FliMN_C"/>
    <property type="match status" value="1"/>
</dbReference>
<dbReference type="PRINTS" id="PR01339">
    <property type="entry name" value="TYPE3OMOPROT"/>
</dbReference>
<dbReference type="SUPFAM" id="SSF101801">
    <property type="entry name" value="Surface presentation of antigens (SPOA)"/>
    <property type="match status" value="1"/>
</dbReference>
<accession>P40699</accession>
<sequence>MSLRVRQIDRREWLLAQTATECQRHGREATLEYPTRQGMWVRLSDAEKRWSAWIKPGDWLEHVSPALAGAAVSAGAEHLVVPWLAATERPFELPVPHLSCRRLCVENPVPGSALPEGKLLHIMSDRGGLWFEHLPELPAVGGGRPKMLRWPLRFVIGSSDTQRSLLGRIGIGDVLLIRTSRAEVYCYAKKLGHFNRVEGGIIVETLDIQHIEEENNTTETAETLPGLNQLPVKLEFVLYRKNVTLAELEAMGQQQLLSLPTNAELNVEIMANGVLLGNGELVQMNDTLGVEIHEWLSESGNGE</sequence>